<dbReference type="EMBL" id="AE000516">
    <property type="protein sequence ID" value="AAK46446.1"/>
    <property type="molecule type" value="Genomic_DNA"/>
</dbReference>
<dbReference type="PIR" id="E70841">
    <property type="entry name" value="E70841"/>
</dbReference>
<dbReference type="RefSeq" id="WP_003410814.1">
    <property type="nucleotide sequence ID" value="NZ_KK341227.1"/>
</dbReference>
<dbReference type="SMR" id="P9WJ26"/>
<dbReference type="KEGG" id="mtc:MT2164"/>
<dbReference type="PATRIC" id="fig|83331.31.peg.2334"/>
<dbReference type="HOGENOM" id="CLU_193746_0_0_11"/>
<dbReference type="Proteomes" id="UP000001020">
    <property type="component" value="Chromosome"/>
</dbReference>
<accession>P9WJ26</accession>
<accession>L0T8P1</accession>
<accession>O53502</accession>
<accession>Q7D7I6</accession>
<sequence>MRTTVTLDDDVEQLVRRRMAERQVSFKKALNDAIRDGASGRPAPSHFSTRTADLGVPAVNLDRALQLAADLEDEELVRRQRRGS</sequence>
<name>VPB37_MYCTO</name>
<proteinExistence type="inferred from homology"/>
<protein>
    <recommendedName>
        <fullName>Putative antitoxin VapB37</fullName>
    </recommendedName>
</protein>
<reference key="1">
    <citation type="journal article" date="2002" name="J. Bacteriol.">
        <title>Whole-genome comparison of Mycobacterium tuberculosis clinical and laboratory strains.</title>
        <authorList>
            <person name="Fleischmann R.D."/>
            <person name="Alland D."/>
            <person name="Eisen J.A."/>
            <person name="Carpenter L."/>
            <person name="White O."/>
            <person name="Peterson J.D."/>
            <person name="DeBoy R.T."/>
            <person name="Dodson R.J."/>
            <person name="Gwinn M.L."/>
            <person name="Haft D.H."/>
            <person name="Hickey E.K."/>
            <person name="Kolonay J.F."/>
            <person name="Nelson W.C."/>
            <person name="Umayam L.A."/>
            <person name="Ermolaeva M.D."/>
            <person name="Salzberg S.L."/>
            <person name="Delcher A."/>
            <person name="Utterback T.R."/>
            <person name="Weidman J.F."/>
            <person name="Khouri H.M."/>
            <person name="Gill J."/>
            <person name="Mikula A."/>
            <person name="Bishai W."/>
            <person name="Jacobs W.R. Jr."/>
            <person name="Venter J.C."/>
            <person name="Fraser C.M."/>
        </authorList>
    </citation>
    <scope>NUCLEOTIDE SEQUENCE [LARGE SCALE GENOMIC DNA]</scope>
    <source>
        <strain>CDC 1551 / Oshkosh</strain>
    </source>
</reference>
<evidence type="ECO:0000250" key="1"/>
<gene>
    <name type="primary">vapB37</name>
    <name type="ordered locus">MT2164</name>
</gene>
<feature type="chain" id="PRO_0000427903" description="Putative antitoxin VapB37">
    <location>
        <begin position="1"/>
        <end position="84"/>
    </location>
</feature>
<comment type="function">
    <text evidence="1">Probable antitoxin component of a type II toxin-antitoxin (TA) system. Its putative cognate toxin is VapC37 (By similarity).</text>
</comment>
<keyword id="KW-1185">Reference proteome</keyword>
<keyword id="KW-1277">Toxin-antitoxin system</keyword>
<organism>
    <name type="scientific">Mycobacterium tuberculosis (strain CDC 1551 / Oshkosh)</name>
    <dbReference type="NCBI Taxonomy" id="83331"/>
    <lineage>
        <taxon>Bacteria</taxon>
        <taxon>Bacillati</taxon>
        <taxon>Actinomycetota</taxon>
        <taxon>Actinomycetes</taxon>
        <taxon>Mycobacteriales</taxon>
        <taxon>Mycobacteriaceae</taxon>
        <taxon>Mycobacterium</taxon>
        <taxon>Mycobacterium tuberculosis complex</taxon>
    </lineage>
</organism>